<gene>
    <name evidence="1" type="primary">rplV</name>
    <name type="ordered locus">THA_1220</name>
</gene>
<comment type="function">
    <text evidence="1">This protein binds specifically to 23S rRNA; its binding is stimulated by other ribosomal proteins, e.g. L4, L17, and L20. It is important during the early stages of 50S assembly. It makes multiple contacts with different domains of the 23S rRNA in the assembled 50S subunit and ribosome (By similarity).</text>
</comment>
<comment type="function">
    <text evidence="1">The globular domain of the protein is located near the polypeptide exit tunnel on the outside of the subunit, while an extended beta-hairpin is found that lines the wall of the exit tunnel in the center of the 70S ribosome.</text>
</comment>
<comment type="subunit">
    <text evidence="1">Part of the 50S ribosomal subunit.</text>
</comment>
<comment type="similarity">
    <text evidence="1">Belongs to the universal ribosomal protein uL22 family.</text>
</comment>
<keyword id="KW-1185">Reference proteome</keyword>
<keyword id="KW-0687">Ribonucleoprotein</keyword>
<keyword id="KW-0689">Ribosomal protein</keyword>
<keyword id="KW-0694">RNA-binding</keyword>
<keyword id="KW-0699">rRNA-binding</keyword>
<name>RL22_THEAB</name>
<feature type="chain" id="PRO_1000142320" description="Large ribosomal subunit protein uL22">
    <location>
        <begin position="1"/>
        <end position="148"/>
    </location>
</feature>
<protein>
    <recommendedName>
        <fullName evidence="1">Large ribosomal subunit protein uL22</fullName>
    </recommendedName>
    <alternativeName>
        <fullName evidence="2">50S ribosomal protein L22</fullName>
    </alternativeName>
</protein>
<accession>B7IHV1</accession>
<sequence length="148" mass="16923">MQVLIKRNGMKRSKFHRERKEKLATMPVYEARAVAKFVRISPRKARSVANSIKGKNVSEAFTILEFSPKKAARLIKNVLKSAVANAVNNHGLNEENLYVYTCYVNDGPRMKRIWPRGRGSADIIQKRMSHITVIVRDKEAEKAAKEEK</sequence>
<evidence type="ECO:0000255" key="1">
    <source>
        <dbReference type="HAMAP-Rule" id="MF_01331"/>
    </source>
</evidence>
<evidence type="ECO:0000305" key="2"/>
<dbReference type="EMBL" id="CP001185">
    <property type="protein sequence ID" value="ACJ75665.1"/>
    <property type="molecule type" value="Genomic_DNA"/>
</dbReference>
<dbReference type="RefSeq" id="WP_004101446.1">
    <property type="nucleotide sequence ID" value="NC_011653.1"/>
</dbReference>
<dbReference type="SMR" id="B7IHV1"/>
<dbReference type="STRING" id="484019.THA_1220"/>
<dbReference type="KEGG" id="taf:THA_1220"/>
<dbReference type="eggNOG" id="COG0091">
    <property type="taxonomic scope" value="Bacteria"/>
</dbReference>
<dbReference type="HOGENOM" id="CLU_083987_3_1_0"/>
<dbReference type="OrthoDB" id="9805969at2"/>
<dbReference type="Proteomes" id="UP000002453">
    <property type="component" value="Chromosome"/>
</dbReference>
<dbReference type="GO" id="GO:0022625">
    <property type="term" value="C:cytosolic large ribosomal subunit"/>
    <property type="evidence" value="ECO:0007669"/>
    <property type="project" value="TreeGrafter"/>
</dbReference>
<dbReference type="GO" id="GO:0019843">
    <property type="term" value="F:rRNA binding"/>
    <property type="evidence" value="ECO:0007669"/>
    <property type="project" value="UniProtKB-UniRule"/>
</dbReference>
<dbReference type="GO" id="GO:0003735">
    <property type="term" value="F:structural constituent of ribosome"/>
    <property type="evidence" value="ECO:0007669"/>
    <property type="project" value="InterPro"/>
</dbReference>
<dbReference type="GO" id="GO:0006412">
    <property type="term" value="P:translation"/>
    <property type="evidence" value="ECO:0007669"/>
    <property type="project" value="UniProtKB-UniRule"/>
</dbReference>
<dbReference type="CDD" id="cd00336">
    <property type="entry name" value="Ribosomal_L22"/>
    <property type="match status" value="1"/>
</dbReference>
<dbReference type="Gene3D" id="3.90.470.10">
    <property type="entry name" value="Ribosomal protein L22/L17"/>
    <property type="match status" value="1"/>
</dbReference>
<dbReference type="HAMAP" id="MF_01331_B">
    <property type="entry name" value="Ribosomal_uL22_B"/>
    <property type="match status" value="1"/>
</dbReference>
<dbReference type="InterPro" id="IPR001063">
    <property type="entry name" value="Ribosomal_uL22"/>
</dbReference>
<dbReference type="InterPro" id="IPR005727">
    <property type="entry name" value="Ribosomal_uL22_bac/chlpt-type"/>
</dbReference>
<dbReference type="InterPro" id="IPR047867">
    <property type="entry name" value="Ribosomal_uL22_bac/org-type"/>
</dbReference>
<dbReference type="InterPro" id="IPR018260">
    <property type="entry name" value="Ribosomal_uL22_CS"/>
</dbReference>
<dbReference type="InterPro" id="IPR036394">
    <property type="entry name" value="Ribosomal_uL22_sf"/>
</dbReference>
<dbReference type="NCBIfam" id="TIGR01044">
    <property type="entry name" value="rplV_bact"/>
    <property type="match status" value="1"/>
</dbReference>
<dbReference type="PANTHER" id="PTHR13501">
    <property type="entry name" value="CHLOROPLAST 50S RIBOSOMAL PROTEIN L22-RELATED"/>
    <property type="match status" value="1"/>
</dbReference>
<dbReference type="PANTHER" id="PTHR13501:SF8">
    <property type="entry name" value="LARGE RIBOSOMAL SUBUNIT PROTEIN UL22M"/>
    <property type="match status" value="1"/>
</dbReference>
<dbReference type="Pfam" id="PF00237">
    <property type="entry name" value="Ribosomal_L22"/>
    <property type="match status" value="1"/>
</dbReference>
<dbReference type="SUPFAM" id="SSF54843">
    <property type="entry name" value="Ribosomal protein L22"/>
    <property type="match status" value="1"/>
</dbReference>
<dbReference type="PROSITE" id="PS00464">
    <property type="entry name" value="RIBOSOMAL_L22"/>
    <property type="match status" value="1"/>
</dbReference>
<proteinExistence type="inferred from homology"/>
<organism>
    <name type="scientific">Thermosipho africanus (strain TCF52B)</name>
    <dbReference type="NCBI Taxonomy" id="484019"/>
    <lineage>
        <taxon>Bacteria</taxon>
        <taxon>Thermotogati</taxon>
        <taxon>Thermotogota</taxon>
        <taxon>Thermotogae</taxon>
        <taxon>Thermotogales</taxon>
        <taxon>Fervidobacteriaceae</taxon>
        <taxon>Thermosipho</taxon>
    </lineage>
</organism>
<reference key="1">
    <citation type="journal article" date="2009" name="J. Bacteriol.">
        <title>The genome of Thermosipho africanus TCF52B: lateral genetic connections to the Firmicutes and Archaea.</title>
        <authorList>
            <person name="Nesboe C.L."/>
            <person name="Bapteste E."/>
            <person name="Curtis B."/>
            <person name="Dahle H."/>
            <person name="Lopez P."/>
            <person name="Macleod D."/>
            <person name="Dlutek M."/>
            <person name="Bowman S."/>
            <person name="Zhaxybayeva O."/>
            <person name="Birkeland N.-K."/>
            <person name="Doolittle W.F."/>
        </authorList>
    </citation>
    <scope>NUCLEOTIDE SEQUENCE [LARGE SCALE GENOMIC DNA]</scope>
    <source>
        <strain>TCF52B</strain>
    </source>
</reference>